<gene>
    <name type="primary">Alms1</name>
    <name type="synonym">Kiaa0328</name>
</gene>
<name>ALMS1_MOUSE</name>
<dbReference type="EMBL" id="AF425257">
    <property type="protein sequence ID" value="AAM62320.1"/>
    <property type="molecule type" value="mRNA"/>
</dbReference>
<dbReference type="EMBL" id="AK172934">
    <property type="protein sequence ID" value="BAD32212.1"/>
    <property type="status" value="ALT_INIT"/>
    <property type="molecule type" value="mRNA"/>
</dbReference>
<dbReference type="EMBL" id="AC104743">
    <property type="status" value="NOT_ANNOTATED_CDS"/>
    <property type="molecule type" value="Genomic_DNA"/>
</dbReference>
<dbReference type="EMBL" id="AC162313">
    <property type="status" value="NOT_ANNOTATED_CDS"/>
    <property type="molecule type" value="Genomic_DNA"/>
</dbReference>
<dbReference type="EMBL" id="AK041679">
    <property type="protein sequence ID" value="BAC31030.1"/>
    <property type="molecule type" value="mRNA"/>
</dbReference>
<dbReference type="CCDS" id="CCDS20298.1">
    <molecule id="Q8K4E0-1"/>
</dbReference>
<dbReference type="RefSeq" id="NP_660258.2">
    <molecule id="Q8K4E0-1"/>
    <property type="nucleotide sequence ID" value="NM_145223.2"/>
</dbReference>
<dbReference type="BioGRID" id="231749">
    <property type="interactions" value="6"/>
</dbReference>
<dbReference type="CORUM" id="Q8K4E0"/>
<dbReference type="FunCoup" id="Q8K4E0">
    <property type="interactions" value="1239"/>
</dbReference>
<dbReference type="IntAct" id="Q8K4E0">
    <property type="interactions" value="11"/>
</dbReference>
<dbReference type="MINT" id="Q8K4E0"/>
<dbReference type="STRING" id="10090.ENSMUSP00000071904"/>
<dbReference type="GlyGen" id="Q8K4E0">
    <property type="glycosylation" value="10 sites, 1 O-linked glycan (5 sites)"/>
</dbReference>
<dbReference type="iPTMnet" id="Q8K4E0"/>
<dbReference type="PhosphoSitePlus" id="Q8K4E0"/>
<dbReference type="jPOST" id="Q8K4E0"/>
<dbReference type="PaxDb" id="10090-ENSMUSP00000071904"/>
<dbReference type="PeptideAtlas" id="Q8K4E0"/>
<dbReference type="ProteomicsDB" id="296174">
    <molecule id="Q8K4E0-1"/>
</dbReference>
<dbReference type="ProteomicsDB" id="296175">
    <molecule id="Q8K4E0-2"/>
</dbReference>
<dbReference type="Pumba" id="Q8K4E0"/>
<dbReference type="Antibodypedia" id="8144">
    <property type="antibodies" value="128 antibodies from 26 providers"/>
</dbReference>
<dbReference type="DNASU" id="236266"/>
<dbReference type="Ensembl" id="ENSMUST00000072018.6">
    <molecule id="Q8K4E0-1"/>
    <property type="protein sequence ID" value="ENSMUSP00000071904.6"/>
    <property type="gene ID" value="ENSMUSG00000063810.8"/>
</dbReference>
<dbReference type="GeneID" id="236266"/>
<dbReference type="KEGG" id="mmu:236266"/>
<dbReference type="UCSC" id="uc009cpz.1">
    <molecule id="Q8K4E0-1"/>
    <property type="organism name" value="mouse"/>
</dbReference>
<dbReference type="UCSC" id="uc009cqe.1">
    <molecule id="Q8K4E0-2"/>
    <property type="organism name" value="mouse"/>
</dbReference>
<dbReference type="AGR" id="MGI:1934606"/>
<dbReference type="CTD" id="7840"/>
<dbReference type="MGI" id="MGI:1934606">
    <property type="gene designation" value="Alms1"/>
</dbReference>
<dbReference type="VEuPathDB" id="HostDB:ENSMUSG00000063810"/>
<dbReference type="eggNOG" id="KOG4613">
    <property type="taxonomic scope" value="Eukaryota"/>
</dbReference>
<dbReference type="GeneTree" id="ENSGT00940000153123"/>
<dbReference type="HOGENOM" id="CLU_000177_0_0_1"/>
<dbReference type="InParanoid" id="Q8K4E0"/>
<dbReference type="OrthoDB" id="6163239at2759"/>
<dbReference type="TreeFam" id="TF335596"/>
<dbReference type="Reactome" id="R-MMU-2565942">
    <property type="pathway name" value="Regulation of PLK1 Activity at G2/M Transition"/>
</dbReference>
<dbReference type="Reactome" id="R-MMU-380259">
    <property type="pathway name" value="Loss of Nlp from mitotic centrosomes"/>
</dbReference>
<dbReference type="Reactome" id="R-MMU-380270">
    <property type="pathway name" value="Recruitment of mitotic centrosome proteins and complexes"/>
</dbReference>
<dbReference type="Reactome" id="R-MMU-380284">
    <property type="pathway name" value="Loss of proteins required for interphase microtubule organization from the centrosome"/>
</dbReference>
<dbReference type="Reactome" id="R-MMU-380320">
    <property type="pathway name" value="Recruitment of NuMA to mitotic centrosomes"/>
</dbReference>
<dbReference type="Reactome" id="R-MMU-5620912">
    <property type="pathway name" value="Anchoring of the basal body to the plasma membrane"/>
</dbReference>
<dbReference type="Reactome" id="R-MMU-8854518">
    <property type="pathway name" value="AURKA Activation by TPX2"/>
</dbReference>
<dbReference type="BioGRID-ORCS" id="236266">
    <property type="hits" value="3 hits in 78 CRISPR screens"/>
</dbReference>
<dbReference type="CD-CODE" id="01CA17F3">
    <property type="entry name" value="Centrosome"/>
</dbReference>
<dbReference type="ChiTaRS" id="Alms1">
    <property type="organism name" value="mouse"/>
</dbReference>
<dbReference type="PRO" id="PR:Q8K4E0"/>
<dbReference type="Proteomes" id="UP000000589">
    <property type="component" value="Chromosome 6"/>
</dbReference>
<dbReference type="RNAct" id="Q8K4E0">
    <property type="molecule type" value="protein"/>
</dbReference>
<dbReference type="Bgee" id="ENSMUSG00000063810">
    <property type="expression patterns" value="Expressed in spermatid and 82 other cell types or tissues"/>
</dbReference>
<dbReference type="ExpressionAtlas" id="Q8K4E0">
    <property type="expression patterns" value="baseline and differential"/>
</dbReference>
<dbReference type="GO" id="GO:0005813">
    <property type="term" value="C:centrosome"/>
    <property type="evidence" value="ECO:0000266"/>
    <property type="project" value="MGI"/>
</dbReference>
<dbReference type="GO" id="GO:0005929">
    <property type="term" value="C:cilium"/>
    <property type="evidence" value="ECO:0007669"/>
    <property type="project" value="UniProtKB-KW"/>
</dbReference>
<dbReference type="GO" id="GO:0005737">
    <property type="term" value="C:cytoplasm"/>
    <property type="evidence" value="ECO:0007669"/>
    <property type="project" value="UniProtKB-SubCell"/>
</dbReference>
<dbReference type="GO" id="GO:0000922">
    <property type="term" value="C:spindle pole"/>
    <property type="evidence" value="ECO:0007669"/>
    <property type="project" value="UniProtKB-SubCell"/>
</dbReference>
<dbReference type="GO" id="GO:0051393">
    <property type="term" value="F:alpha-actinin binding"/>
    <property type="evidence" value="ECO:0000353"/>
    <property type="project" value="MGI"/>
</dbReference>
<dbReference type="GO" id="GO:0006915">
    <property type="term" value="P:apoptotic process"/>
    <property type="evidence" value="ECO:0000315"/>
    <property type="project" value="MGI"/>
</dbReference>
<dbReference type="GO" id="GO:0019722">
    <property type="term" value="P:calcium-mediated signaling"/>
    <property type="evidence" value="ECO:0000315"/>
    <property type="project" value="MGI"/>
</dbReference>
<dbReference type="GO" id="GO:0042632">
    <property type="term" value="P:cholesterol homeostasis"/>
    <property type="evidence" value="ECO:0000315"/>
    <property type="project" value="MGI"/>
</dbReference>
<dbReference type="GO" id="GO:0060271">
    <property type="term" value="P:cilium assembly"/>
    <property type="evidence" value="ECO:0000315"/>
    <property type="project" value="MGI"/>
</dbReference>
<dbReference type="GO" id="GO:0016197">
    <property type="term" value="P:endosomal transport"/>
    <property type="evidence" value="ECO:0000266"/>
    <property type="project" value="MGI"/>
</dbReference>
<dbReference type="GO" id="GO:1904019">
    <property type="term" value="P:epithelial cell apoptotic process"/>
    <property type="evidence" value="ECO:0000315"/>
    <property type="project" value="MGI"/>
</dbReference>
<dbReference type="GO" id="GO:0050673">
    <property type="term" value="P:epithelial cell proliferation"/>
    <property type="evidence" value="ECO:0000315"/>
    <property type="project" value="MGI"/>
</dbReference>
<dbReference type="GO" id="GO:0001736">
    <property type="term" value="P:establishment of planar polarity"/>
    <property type="evidence" value="ECO:0000315"/>
    <property type="project" value="MGI"/>
</dbReference>
<dbReference type="GO" id="GO:0042593">
    <property type="term" value="P:glucose homeostasis"/>
    <property type="evidence" value="ECO:0000315"/>
    <property type="project" value="MGI"/>
</dbReference>
<dbReference type="GO" id="GO:0060122">
    <property type="term" value="P:inner ear receptor cell stereocilium organization"/>
    <property type="evidence" value="ECO:0000315"/>
    <property type="project" value="MGI"/>
</dbReference>
<dbReference type="GO" id="GO:0001678">
    <property type="term" value="P:intracellular glucose homeostasis"/>
    <property type="evidence" value="ECO:0000266"/>
    <property type="project" value="MGI"/>
</dbReference>
<dbReference type="GO" id="GO:0006629">
    <property type="term" value="P:lipid metabolic process"/>
    <property type="evidence" value="ECO:0000315"/>
    <property type="project" value="MGI"/>
</dbReference>
<dbReference type="GO" id="GO:1904036">
    <property type="term" value="P:negative regulation of epithelial cell apoptotic process"/>
    <property type="evidence" value="ECO:0000315"/>
    <property type="project" value="MGI"/>
</dbReference>
<dbReference type="GO" id="GO:0040015">
    <property type="term" value="P:negative regulation of multicellular organism growth"/>
    <property type="evidence" value="ECO:0000315"/>
    <property type="project" value="MGI"/>
</dbReference>
<dbReference type="GO" id="GO:0030728">
    <property type="term" value="P:ovulation"/>
    <property type="evidence" value="ECO:0000315"/>
    <property type="project" value="MGI"/>
</dbReference>
<dbReference type="GO" id="GO:0120162">
    <property type="term" value="P:positive regulation of cold-induced thermogenesis"/>
    <property type="evidence" value="ECO:0000315"/>
    <property type="project" value="YuBioLab"/>
</dbReference>
<dbReference type="GO" id="GO:0045598">
    <property type="term" value="P:regulation of fat cell differentiation"/>
    <property type="evidence" value="ECO:0000315"/>
    <property type="project" value="MGI"/>
</dbReference>
<dbReference type="GO" id="GO:0051492">
    <property type="term" value="P:regulation of stress fiber assembly"/>
    <property type="evidence" value="ECO:0000266"/>
    <property type="project" value="MGI"/>
</dbReference>
<dbReference type="GO" id="GO:0060041">
    <property type="term" value="P:retina development in camera-type eye"/>
    <property type="evidence" value="ECO:0000315"/>
    <property type="project" value="MGI"/>
</dbReference>
<dbReference type="GO" id="GO:0046548">
    <property type="term" value="P:retinal rod cell development"/>
    <property type="evidence" value="ECO:0000315"/>
    <property type="project" value="MGI"/>
</dbReference>
<dbReference type="GO" id="GO:0007605">
    <property type="term" value="P:sensory perception of sound"/>
    <property type="evidence" value="ECO:0000315"/>
    <property type="project" value="MGI"/>
</dbReference>
<dbReference type="GO" id="GO:0007286">
    <property type="term" value="P:spermatid development"/>
    <property type="evidence" value="ECO:0000315"/>
    <property type="project" value="MGI"/>
</dbReference>
<dbReference type="InterPro" id="IPR029299">
    <property type="entry name" value="ALMS_motif"/>
</dbReference>
<dbReference type="InterPro" id="IPR040972">
    <property type="entry name" value="ALMS_repeat"/>
</dbReference>
<dbReference type="PANTHER" id="PTHR21553">
    <property type="entry name" value="ALMS1-RELATED"/>
    <property type="match status" value="1"/>
</dbReference>
<dbReference type="PANTHER" id="PTHR21553:SF22">
    <property type="entry name" value="CENTROSOME-ASSOCIATED PROTEIN ALMS1"/>
    <property type="match status" value="1"/>
</dbReference>
<dbReference type="Pfam" id="PF15309">
    <property type="entry name" value="ALMS_motif"/>
    <property type="match status" value="1"/>
</dbReference>
<dbReference type="Pfam" id="PF18727">
    <property type="entry name" value="ALMS_repeat"/>
    <property type="match status" value="11"/>
</dbReference>
<evidence type="ECO:0000250" key="1"/>
<evidence type="ECO:0000250" key="2">
    <source>
        <dbReference type="UniProtKB" id="Q8TCU4"/>
    </source>
</evidence>
<evidence type="ECO:0000256" key="3">
    <source>
        <dbReference type="SAM" id="MobiDB-lite"/>
    </source>
</evidence>
<evidence type="ECO:0000269" key="4">
    <source>
    </source>
</evidence>
<evidence type="ECO:0000269" key="5">
    <source>
    </source>
</evidence>
<evidence type="ECO:0000303" key="6">
    <source>
    </source>
</evidence>
<evidence type="ECO:0000305" key="7"/>
<evidence type="ECO:0007744" key="8">
    <source>
    </source>
</evidence>
<proteinExistence type="evidence at protein level"/>
<reference key="1">
    <citation type="journal article" date="2002" name="Nat. Genet.">
        <title>Mutations in ALMS1 cause obesity, type 2 diabetes and neurosensory degeneration in Alstrom syndrome.</title>
        <authorList>
            <person name="Collin G.B."/>
            <person name="Marshall J.D."/>
            <person name="Ikeda A."/>
            <person name="So W.V."/>
            <person name="Russell-Eggitt I."/>
            <person name="Maffei P."/>
            <person name="Beck S."/>
            <person name="Boerkoel C."/>
            <person name="Sicolo N."/>
            <person name="Martin M."/>
            <person name="Nishina P.M."/>
            <person name="Naggert J.K."/>
        </authorList>
    </citation>
    <scope>NUCLEOTIDE SEQUENCE [MRNA] (ISOFORM 1)</scope>
    <scope>TISSUE SPECIFICITY</scope>
    <source>
        <strain>C57BL/6J</strain>
        <tissue>Brain</tissue>
    </source>
</reference>
<reference key="2">
    <citation type="journal article" date="2004" name="DNA Res.">
        <title>Prediction of the coding sequences of mouse homologues of KIAA gene: IV. The complete nucleotide sequences of 500 mouse KIAA-homologous cDNAs identified by screening of terminal sequences of cDNA clones randomly sampled from size-fractionated libraries.</title>
        <authorList>
            <person name="Okazaki N."/>
            <person name="Kikuno R."/>
            <person name="Ohara R."/>
            <person name="Inamoto S."/>
            <person name="Koseki H."/>
            <person name="Hiraoka S."/>
            <person name="Saga Y."/>
            <person name="Seino S."/>
            <person name="Nishimura M."/>
            <person name="Kaisho T."/>
            <person name="Hoshino K."/>
            <person name="Kitamura H."/>
            <person name="Nagase T."/>
            <person name="Ohara O."/>
            <person name="Koga H."/>
        </authorList>
    </citation>
    <scope>NUCLEOTIDE SEQUENCE [LARGE SCALE MRNA] (ISOFORM 2)</scope>
    <source>
        <tissue>Embryonic tail</tissue>
    </source>
</reference>
<reference key="3">
    <citation type="journal article" date="2009" name="PLoS Biol.">
        <title>Lineage-specific biology revealed by a finished genome assembly of the mouse.</title>
        <authorList>
            <person name="Church D.M."/>
            <person name="Goodstadt L."/>
            <person name="Hillier L.W."/>
            <person name="Zody M.C."/>
            <person name="Goldstein S."/>
            <person name="She X."/>
            <person name="Bult C.J."/>
            <person name="Agarwala R."/>
            <person name="Cherry J.L."/>
            <person name="DiCuccio M."/>
            <person name="Hlavina W."/>
            <person name="Kapustin Y."/>
            <person name="Meric P."/>
            <person name="Maglott D."/>
            <person name="Birtle Z."/>
            <person name="Marques A.C."/>
            <person name="Graves T."/>
            <person name="Zhou S."/>
            <person name="Teague B."/>
            <person name="Potamousis K."/>
            <person name="Churas C."/>
            <person name="Place M."/>
            <person name="Herschleb J."/>
            <person name="Runnheim R."/>
            <person name="Forrest D."/>
            <person name="Amos-Landgraf J."/>
            <person name="Schwartz D.C."/>
            <person name="Cheng Z."/>
            <person name="Lindblad-Toh K."/>
            <person name="Eichler E.E."/>
            <person name="Ponting C.P."/>
        </authorList>
    </citation>
    <scope>NUCLEOTIDE SEQUENCE [LARGE SCALE GENOMIC DNA]</scope>
    <source>
        <strain>C57BL/6J</strain>
    </source>
</reference>
<reference key="4">
    <citation type="journal article" date="2005" name="Science">
        <title>The transcriptional landscape of the mammalian genome.</title>
        <authorList>
            <person name="Carninci P."/>
            <person name="Kasukawa T."/>
            <person name="Katayama S."/>
            <person name="Gough J."/>
            <person name="Frith M.C."/>
            <person name="Maeda N."/>
            <person name="Oyama R."/>
            <person name="Ravasi T."/>
            <person name="Lenhard B."/>
            <person name="Wells C."/>
            <person name="Kodzius R."/>
            <person name="Shimokawa K."/>
            <person name="Bajic V.B."/>
            <person name="Brenner S.E."/>
            <person name="Batalov S."/>
            <person name="Forrest A.R."/>
            <person name="Zavolan M."/>
            <person name="Davis M.J."/>
            <person name="Wilming L.G."/>
            <person name="Aidinis V."/>
            <person name="Allen J.E."/>
            <person name="Ambesi-Impiombato A."/>
            <person name="Apweiler R."/>
            <person name="Aturaliya R.N."/>
            <person name="Bailey T.L."/>
            <person name="Bansal M."/>
            <person name="Baxter L."/>
            <person name="Beisel K.W."/>
            <person name="Bersano T."/>
            <person name="Bono H."/>
            <person name="Chalk A.M."/>
            <person name="Chiu K.P."/>
            <person name="Choudhary V."/>
            <person name="Christoffels A."/>
            <person name="Clutterbuck D.R."/>
            <person name="Crowe M.L."/>
            <person name="Dalla E."/>
            <person name="Dalrymple B.P."/>
            <person name="de Bono B."/>
            <person name="Della Gatta G."/>
            <person name="di Bernardo D."/>
            <person name="Down T."/>
            <person name="Engstrom P."/>
            <person name="Fagiolini M."/>
            <person name="Faulkner G."/>
            <person name="Fletcher C.F."/>
            <person name="Fukushima T."/>
            <person name="Furuno M."/>
            <person name="Futaki S."/>
            <person name="Gariboldi M."/>
            <person name="Georgii-Hemming P."/>
            <person name="Gingeras T.R."/>
            <person name="Gojobori T."/>
            <person name="Green R.E."/>
            <person name="Gustincich S."/>
            <person name="Harbers M."/>
            <person name="Hayashi Y."/>
            <person name="Hensch T.K."/>
            <person name="Hirokawa N."/>
            <person name="Hill D."/>
            <person name="Huminiecki L."/>
            <person name="Iacono M."/>
            <person name="Ikeo K."/>
            <person name="Iwama A."/>
            <person name="Ishikawa T."/>
            <person name="Jakt M."/>
            <person name="Kanapin A."/>
            <person name="Katoh M."/>
            <person name="Kawasawa Y."/>
            <person name="Kelso J."/>
            <person name="Kitamura H."/>
            <person name="Kitano H."/>
            <person name="Kollias G."/>
            <person name="Krishnan S.P."/>
            <person name="Kruger A."/>
            <person name="Kummerfeld S.K."/>
            <person name="Kurochkin I.V."/>
            <person name="Lareau L.F."/>
            <person name="Lazarevic D."/>
            <person name="Lipovich L."/>
            <person name="Liu J."/>
            <person name="Liuni S."/>
            <person name="McWilliam S."/>
            <person name="Madan Babu M."/>
            <person name="Madera M."/>
            <person name="Marchionni L."/>
            <person name="Matsuda H."/>
            <person name="Matsuzawa S."/>
            <person name="Miki H."/>
            <person name="Mignone F."/>
            <person name="Miyake S."/>
            <person name="Morris K."/>
            <person name="Mottagui-Tabar S."/>
            <person name="Mulder N."/>
            <person name="Nakano N."/>
            <person name="Nakauchi H."/>
            <person name="Ng P."/>
            <person name="Nilsson R."/>
            <person name="Nishiguchi S."/>
            <person name="Nishikawa S."/>
            <person name="Nori F."/>
            <person name="Ohara O."/>
            <person name="Okazaki Y."/>
            <person name="Orlando V."/>
            <person name="Pang K.C."/>
            <person name="Pavan W.J."/>
            <person name="Pavesi G."/>
            <person name="Pesole G."/>
            <person name="Petrovsky N."/>
            <person name="Piazza S."/>
            <person name="Reed J."/>
            <person name="Reid J.F."/>
            <person name="Ring B.Z."/>
            <person name="Ringwald M."/>
            <person name="Rost B."/>
            <person name="Ruan Y."/>
            <person name="Salzberg S.L."/>
            <person name="Sandelin A."/>
            <person name="Schneider C."/>
            <person name="Schoenbach C."/>
            <person name="Sekiguchi K."/>
            <person name="Semple C.A."/>
            <person name="Seno S."/>
            <person name="Sessa L."/>
            <person name="Sheng Y."/>
            <person name="Shibata Y."/>
            <person name="Shimada H."/>
            <person name="Shimada K."/>
            <person name="Silva D."/>
            <person name="Sinclair B."/>
            <person name="Sperling S."/>
            <person name="Stupka E."/>
            <person name="Sugiura K."/>
            <person name="Sultana R."/>
            <person name="Takenaka Y."/>
            <person name="Taki K."/>
            <person name="Tammoja K."/>
            <person name="Tan S.L."/>
            <person name="Tang S."/>
            <person name="Taylor M.S."/>
            <person name="Tegner J."/>
            <person name="Teichmann S.A."/>
            <person name="Ueda H.R."/>
            <person name="van Nimwegen E."/>
            <person name="Verardo R."/>
            <person name="Wei C.L."/>
            <person name="Yagi K."/>
            <person name="Yamanishi H."/>
            <person name="Zabarovsky E."/>
            <person name="Zhu S."/>
            <person name="Zimmer A."/>
            <person name="Hide W."/>
            <person name="Bult C."/>
            <person name="Grimmond S.M."/>
            <person name="Teasdale R.D."/>
            <person name="Liu E.T."/>
            <person name="Brusic V."/>
            <person name="Quackenbush J."/>
            <person name="Wahlestedt C."/>
            <person name="Mattick J.S."/>
            <person name="Hume D.A."/>
            <person name="Kai C."/>
            <person name="Sasaki D."/>
            <person name="Tomaru Y."/>
            <person name="Fukuda S."/>
            <person name="Kanamori-Katayama M."/>
            <person name="Suzuki M."/>
            <person name="Aoki J."/>
            <person name="Arakawa T."/>
            <person name="Iida J."/>
            <person name="Imamura K."/>
            <person name="Itoh M."/>
            <person name="Kato T."/>
            <person name="Kawaji H."/>
            <person name="Kawagashira N."/>
            <person name="Kawashima T."/>
            <person name="Kojima M."/>
            <person name="Kondo S."/>
            <person name="Konno H."/>
            <person name="Nakano K."/>
            <person name="Ninomiya N."/>
            <person name="Nishio T."/>
            <person name="Okada M."/>
            <person name="Plessy C."/>
            <person name="Shibata K."/>
            <person name="Shiraki T."/>
            <person name="Suzuki S."/>
            <person name="Tagami M."/>
            <person name="Waki K."/>
            <person name="Watahiki A."/>
            <person name="Okamura-Oho Y."/>
            <person name="Suzuki H."/>
            <person name="Kawai J."/>
            <person name="Hayashizaki Y."/>
        </authorList>
    </citation>
    <scope>NUCLEOTIDE SEQUENCE [LARGE SCALE MRNA] OF 2941-3251 (ISOFORMS 1/2)</scope>
    <source>
        <strain>C57BL/6J</strain>
        <tissue>Thymus</tissue>
    </source>
</reference>
<reference key="5">
    <citation type="journal article" date="2005" name="Hum. Mol. Genet.">
        <title>Alms1-disrupted mice recapitulate human Alstrom syndrome.</title>
        <authorList>
            <person name="Collin G.B."/>
            <person name="Cyr E."/>
            <person name="Bronson R."/>
            <person name="Marshall J.D."/>
            <person name="Gifford E.J."/>
            <person name="Hicks W."/>
            <person name="Murray S.A."/>
            <person name="Zheng Q.Y."/>
            <person name="Smith R.S."/>
            <person name="Nishina P.M."/>
            <person name="Naggert J.K."/>
        </authorList>
    </citation>
    <scope>POSSIBLE FUNCTION</scope>
    <scope>DEVELOPMENTAL STAGE</scope>
    <scope>DISRUPTION PHENOTYPE</scope>
</reference>
<reference key="6">
    <citation type="journal article" date="2010" name="Cell">
        <title>A tissue-specific atlas of mouse protein phosphorylation and expression.</title>
        <authorList>
            <person name="Huttlin E.L."/>
            <person name="Jedrychowski M.P."/>
            <person name="Elias J.E."/>
            <person name="Goswami T."/>
            <person name="Rad R."/>
            <person name="Beausoleil S.A."/>
            <person name="Villen J."/>
            <person name="Haas W."/>
            <person name="Sowa M.E."/>
            <person name="Gygi S.P."/>
        </authorList>
    </citation>
    <scope>PHOSPHORYLATION [LARGE SCALE ANALYSIS] AT SER-1916</scope>
    <scope>IDENTIFICATION BY MASS SPECTROMETRY [LARGE SCALE ANALYSIS]</scope>
    <source>
        <tissue>Spleen</tissue>
        <tissue>Testis</tissue>
    </source>
</reference>
<protein>
    <recommendedName>
        <fullName evidence="7">Centrosome-associated protein ALMS1</fullName>
    </recommendedName>
    <alternativeName>
        <fullName>Alstrom syndrome protein 1 homolog</fullName>
    </alternativeName>
</protein>
<sequence length="3251" mass="360215">MEPEDLPWPDELEEEEEEEEEEGEEEEGKKEVENASAAATEEALTSEESGRLEEFEEAGPDLDFNYESQRQESSDEEEDELAKAWLQAHPDRPGSAFSLPPPTPPPPPPPLSPRLRYTPVEHLGKTEVVPLTCRVWQQSSYQDNSRAQFSNSSTMLLETGVRWGSEEDQRTESWHCLPQERDSSQTLAMSQTEIGRVEGTEVPDLPSQEGGLPAQSQCPGKKPKLNVLCSPLLVIQDNFAAPDLPLLTCLIQDQEEVEPDSLFQQSELEFAPLRGIPDKSEDSEWLARPSEVSEALIQATSETSSDLANSCFSISQHPLTEGLQGKAESGVLTRCGDAKYSSLYENLGAQSERIAVLQREVGCSNLGISQASPSSLPSFVPQEPTSEPEYHSSNLRMLRVSPDTLLTTHTHSAGSADQKIGAAVVSSAYSQEIKPGSFHQEELPDRHLNEEIRKVSPALRTAGQKPEMLPVQSSSYSKGMKSIFYQHPVSHGHQGKEPLSVSAVCGSAGNKAFHQLSTLSDSLLTEETWPVSVIPGLGNQKTPLPSEFSLSYSHRGKNLPEDVVKVSTDSGSAHKKADILTASSRTYQHKMKPANIYHQELPDSRVPIGTRKVAFESGPAGQKSGVSHPYGEMPSVFYQQGLPDRHSAKSPTKTFIPGPADQKTDLSPVPPTSSSHAEKPVSPYQLTLPGSHLPEDVFKASSVCKSSDELSGITALTSASYSYKGRPNSSYQQKFPDSHLNEEAQKILGTTGTVDQKTVTPTMSSSFLQKEKPSIFYQQTLPDGGLSEEDLQVSAVPWPADQNIAIPTVTSAAFSQREKPRIFYQQTLSVDRLPGEPLNVLGTSGPPDQNTGAPTVTPSSYFPGEESIIFYQAGFPGNTLSAMSFKVPRISGSTEQTNVTTGSSSSYSVGEKSIIFYHQALPDGRLPQEASPAPADLNTGEPPMYLASCSVGVKPIIFYQQPMSDSQRTKGHKESDVPGPTDQKTGIATVHSTSQSYIGRRTVSYQKEFPDLSEKALKVLGDVGSTEQKTQIPVVSSALLHKEGPSAYQEDLPDLTEEPLQILGVSEEVSSSSYQRKLPDHIEVFLKSVGSGSADRKTGAQIVSSSREKSSGFHQQELPNTGGDAVDAFHPEPVVQEVRKVQTPGAPAGPSSSHFHKEKLSDYQKASPHRDLTESSLKASTVPGLSDQKKKPAVSSGFCLHKEKHEISASALLNCQTAELLTVTQRSCLHREDPAISTVIKPDDQKIPLPTTFHGSSDQKVKPVIFVQKQLRDRDQSEDIPKISTVSEPTVVNTVLPVLLPGSYSHREKSDSFYPQELPDGHLTEVDLKVSSGLGQADQISGLPTGIPGTYSHSEKHQLISEHVQELMDNLNSSESSCLSVDSMPLNSQIDDGVIICKPESLGFANAGCEEMQNIDRGSKTLKEIQTLLMEAENMALKRCNFSVPLVPFRDVNDVSFIRSKKVVCFKESSTTDVCTQRESFVEEVPHIEYVQKDIGTQTNLKYQRGVGNWEFISSATFRSPLQEAEGTARMAYDETFRQYKAARSVMRSEPEGCSTGIGNKMIIPMMTIIKSDSSSDVSDGCCSWDNNLPESLESVSDVFLNFFPYTSPKTSITDSREEEWLSESEDGYGSTDSLAAHVKYLLQCETSLNQAKQILKNAEEEEYRVRTQAWNLKFNLGRDRGYSISELNEDDRRKVEEIKAKLFGHGRATHMSEGLRSPQGIGCLPEAVCSRIIIESHEKGCFRTLTAEQPRPDSCHCAFRSVEPSDLIRGHRSPSSWRGRHINLSRSIEQSNPCFKVGSSFQLQSHPPFQKLLPDDIKISKGVGMPVHAYMDPQPSELVEPTCVPAKEMDFPSSSQILPPEPKKQFTTAITFSSHEHSECISDSSGCKVGVTADSQCSGPSLGVFKPHIPEEQISPRDLKQKTSFQSSLERHGSTPVTILADGSRQRQKLPVDFEHSHQKEKLLQRLGFKVSHSEPNVSTNVSNFKGVQFSGKDTIVSQDKLTSTVEVKEKNVTVTPDLPSCIFLEQPELFEESHTPHTDLQMRKYPSPSCPEIASRIFLEQPKLSEQSKAPHVDREIREDHSFFPKCQDYIVADPSPDFPDQQQCKPPDVVGHTRKQNSLLSEGQDYELEEVQHIPQSYFSNMVNVEAKVSDAISQSAPDHCTAASTPPSNRKALSCVRITLCPKTSSKLDSGTLGERFHSLDPASKTRINSEFNSDLRIISSRSLEPTSKLLTCKPVAQDQESLVFLGPKSPLDLQVAQSSLPDSKTIFQDLKTKPPQNSQIVTSRQTQVNISHLEGYSKPEGTPVSADGSQEQSKVSFTTSFGKLSSDAITQITTESPEKTTFSSEIFIHADDRGQGILDPMAQKPSRFASSSSVQQIPASHGKDAQPVLLPYKPSGSSKMYYVPLLKRVPSYLDSKSDTTVESSHSGSNDAIAPDFPPQMLGTRDDDLSNTVNIKHKEGIYSKRAATKGKNPSQKGDAAAPVQMPITWDENVLDENQEEVISRGVVIKMAGPEEMSSLEKDLAGPSDITVQDRKTENLPDTKSIKQKEGSLEIESECHSAFENTAHSVFRSAKFYFHHPVHLPHEQDFCHESLGRSVFMQHSWKDFFHHHSGHSCLPPPGPSSDKLDKTKMDYTRIKSLSINLNLGEHEKIHTIKNQARDPKGKRQANEQKKDQKVTPELTTECPVSLNELWNRYQERQKQQNPSGACDTKELSLVERLDRLAKLLQNPITHSLRASESAQDDSRGGHRAREWTGRRQQKQKGKQHRKWSKSLERGQSTGDFRKSKVFSPHQGGKSSQFKIEQIKLDKYILRKEPGFNNVSNTSLDSRPSEESVSLTDSPNIFSSTDSPVDSDVLTPTDRDMPLNERSSSISTIDTVRLIQAFGQDRLSLSPRRIKLYSTVTSQRRRYLEQPCKHNRKALNTACPQMTSEHSRRRHIQVANHMTSSDSVSSPGSLLSLDSALSNEETVRMVSKGVQAGNLEIVAGVKKYTQDVGVTFPTPSSSEARLEEDSDVTSSSEEKAKEKKFLSNYLQTKNLRKNKPNPCAGVSWFVPVESGQSGSKKENLPKIYRPVISWFEPVTKTKPWREPLREQNWQAQCMNSRGSLGGPGRDSGQVSLRPFVRATLQESLQLHRPDFISHSGERIKRLKLLVQERKLQSLFQSEREALFHSARPLPRRVLLAVQKNKPIGKKEMIQRTRRIYEQLPEVKKKREEEKRKSEYKSYWLRAQHYKMKVTNHLLGRKVPWD</sequence>
<feature type="chain" id="PRO_0000225593" description="Centrosome-associated protein ALMS1">
    <location>
        <begin position="1"/>
        <end position="3251"/>
    </location>
</feature>
<feature type="repeat" description="1">
    <location>
        <begin position="440"/>
        <end position="485"/>
    </location>
</feature>
<feature type="repeat" description="2">
    <location>
        <begin position="486"/>
        <end position="534"/>
    </location>
</feature>
<feature type="repeat" description="3">
    <location>
        <begin position="540"/>
        <end position="587"/>
    </location>
</feature>
<feature type="repeat" description="4">
    <location>
        <begin position="588"/>
        <end position="638"/>
    </location>
</feature>
<feature type="repeat" description="5">
    <location>
        <begin position="639"/>
        <end position="684"/>
    </location>
</feature>
<feature type="repeat" description="6">
    <location>
        <begin position="685"/>
        <end position="731"/>
    </location>
</feature>
<feature type="repeat" description="7">
    <location>
        <begin position="732"/>
        <end position="777"/>
    </location>
</feature>
<feature type="repeat" description="8">
    <location>
        <begin position="778"/>
        <end position="824"/>
    </location>
</feature>
<feature type="repeat" description="9">
    <location>
        <begin position="825"/>
        <end position="871"/>
    </location>
</feature>
<feature type="repeat" description="10">
    <location>
        <begin position="872"/>
        <end position="917"/>
    </location>
</feature>
<feature type="repeat" description="11">
    <location>
        <begin position="918"/>
        <end position="959"/>
    </location>
</feature>
<feature type="repeat" description="12">
    <location>
        <begin position="960"/>
        <end position="1005"/>
    </location>
</feature>
<feature type="repeat" description="13">
    <location>
        <begin position="1006"/>
        <end position="1048"/>
    </location>
</feature>
<feature type="repeat" description="14">
    <location>
        <begin position="1115"/>
        <end position="1163"/>
    </location>
</feature>
<feature type="repeat" description="15">
    <location>
        <begin position="1164"/>
        <end position="1208"/>
    </location>
</feature>
<feature type="repeat" description="16">
    <location>
        <begin position="1269"/>
        <end position="1314"/>
    </location>
</feature>
<feature type="repeat" description="17">
    <location>
        <begin position="1315"/>
        <end position="1362"/>
    </location>
</feature>
<feature type="region of interest" description="Disordered" evidence="3">
    <location>
        <begin position="1"/>
        <end position="116"/>
    </location>
</feature>
<feature type="region of interest" description="17 X 47 AA approximate tandem repeat">
    <location>
        <begin position="440"/>
        <end position="1362"/>
    </location>
</feature>
<feature type="region of interest" description="Disordered" evidence="3">
    <location>
        <begin position="615"/>
        <end position="686"/>
    </location>
</feature>
<feature type="region of interest" description="Disordered" evidence="3">
    <location>
        <begin position="963"/>
        <end position="986"/>
    </location>
</feature>
<feature type="region of interest" description="Disordered" evidence="3">
    <location>
        <begin position="1094"/>
        <end position="1115"/>
    </location>
</feature>
<feature type="region of interest" description="Disordered" evidence="3">
    <location>
        <begin position="1142"/>
        <end position="1189"/>
    </location>
</feature>
<feature type="region of interest" description="Disordered" evidence="3">
    <location>
        <begin position="2421"/>
        <end position="2452"/>
    </location>
</feature>
<feature type="region of interest" description="Disordered" evidence="3">
    <location>
        <begin position="2464"/>
        <end position="2485"/>
    </location>
</feature>
<feature type="region of interest" description="Disordered" evidence="3">
    <location>
        <begin position="2659"/>
        <end position="2685"/>
    </location>
</feature>
<feature type="region of interest" description="Disordered" evidence="3">
    <location>
        <begin position="2738"/>
        <end position="2804"/>
    </location>
</feature>
<feature type="region of interest" description="Disordered" evidence="3">
    <location>
        <begin position="2822"/>
        <end position="2871"/>
    </location>
</feature>
<feature type="region of interest" description="Disordered" evidence="3">
    <location>
        <begin position="3002"/>
        <end position="3027"/>
    </location>
</feature>
<feature type="region of interest" description="ALMS motif">
    <location>
        <begin position="3129"/>
        <end position="3251"/>
    </location>
</feature>
<feature type="compositionally biased region" description="Acidic residues" evidence="3">
    <location>
        <begin position="1"/>
        <end position="26"/>
    </location>
</feature>
<feature type="compositionally biased region" description="Low complexity" evidence="3">
    <location>
        <begin position="34"/>
        <end position="47"/>
    </location>
</feature>
<feature type="compositionally biased region" description="Pro residues" evidence="3">
    <location>
        <begin position="99"/>
        <end position="112"/>
    </location>
</feature>
<feature type="compositionally biased region" description="Basic and acidic residues" evidence="3">
    <location>
        <begin position="1158"/>
        <end position="1173"/>
    </location>
</feature>
<feature type="compositionally biased region" description="Polar residues" evidence="3">
    <location>
        <begin position="2423"/>
        <end position="2434"/>
    </location>
</feature>
<feature type="compositionally biased region" description="Basic and acidic residues" evidence="3">
    <location>
        <begin position="2659"/>
        <end position="2681"/>
    </location>
</feature>
<feature type="compositionally biased region" description="Basic and acidic residues" evidence="3">
    <location>
        <begin position="2747"/>
        <end position="2760"/>
    </location>
</feature>
<feature type="compositionally biased region" description="Basic residues" evidence="3">
    <location>
        <begin position="2762"/>
        <end position="2775"/>
    </location>
</feature>
<feature type="compositionally biased region" description="Polar residues" evidence="3">
    <location>
        <begin position="2823"/>
        <end position="2854"/>
    </location>
</feature>
<feature type="modified residue" description="Phosphoserine" evidence="2">
    <location>
        <position position="401"/>
    </location>
</feature>
<feature type="modified residue" description="Phosphoserine" evidence="2">
    <location>
        <position position="1305"/>
    </location>
</feature>
<feature type="modified residue" description="Phosphoserine" evidence="2">
    <location>
        <position position="1623"/>
    </location>
</feature>
<feature type="modified residue" description="Phosphoserine" evidence="2">
    <location>
        <position position="1788"/>
    </location>
</feature>
<feature type="modified residue" description="Phosphoserine" evidence="8">
    <location>
        <position position="1916"/>
    </location>
</feature>
<feature type="modified residue" description="Phosphoserine" evidence="2">
    <location>
        <position position="1958"/>
    </location>
</feature>
<feature type="splice variant" id="VSP_017350" description="In isoform 2." evidence="6">
    <location>
        <begin position="1"/>
        <end position="2947"/>
    </location>
</feature>
<feature type="sequence conflict" description="In Ref. 1; AAM62320." evidence="7" ref="1">
    <original>E</original>
    <variation>Y</variation>
    <location>
        <position position="26"/>
    </location>
</feature>
<feature type="sequence conflict" description="In Ref. 1; AAM62320." evidence="7" ref="1">
    <original>NPS</original>
    <variation>SPC</variation>
    <location>
        <begin position="2708"/>
        <end position="2710"/>
    </location>
</feature>
<feature type="sequence conflict" description="In Ref. 2; BAD32212." evidence="7" ref="2">
    <original>D</original>
    <variation>G</variation>
    <location>
        <position position="3017"/>
    </location>
</feature>
<feature type="sequence conflict" description="In Ref. 2; BAD32212." evidence="7" ref="2">
    <original>S</original>
    <variation>N</variation>
    <location>
        <position position="3060"/>
    </location>
</feature>
<feature type="sequence conflict" description="In Ref. 2; BAD32212." evidence="7" ref="2">
    <original>V</original>
    <variation>G</variation>
    <location>
        <position position="3077"/>
    </location>
</feature>
<feature type="sequence conflict" description="In Ref. 2; BAD32212." evidence="7" ref="2">
    <original>W</original>
    <variation>R</variation>
    <location>
        <position position="3229"/>
    </location>
</feature>
<keyword id="KW-0025">Alternative splicing</keyword>
<keyword id="KW-0966">Cell projection</keyword>
<keyword id="KW-0969">Cilium</keyword>
<keyword id="KW-0963">Cytoplasm</keyword>
<keyword id="KW-0206">Cytoskeleton</keyword>
<keyword id="KW-0597">Phosphoprotein</keyword>
<keyword id="KW-1185">Reference proteome</keyword>
<keyword id="KW-0677">Repeat</keyword>
<comment type="function">
    <text evidence="1">Involved in PCM1-dependent intracellular transport. Required, directly or indirectly, for the localization of NCAPD2 to the proximal ends of centrioles. Required for proper formation and/or maintenance of primary cilia (PC), microtubule-based structures that protrude from the surface of epithelial cells (By similarity).</text>
</comment>
<comment type="interaction">
    <interactant intactId="EBI-6272972">
        <id>Q8K4E0</id>
    </interactant>
    <interactant intactId="EBI-774010">
        <id>Q7TPR4</id>
        <label>Actn1</label>
    </interactant>
    <organismsDiffer>false</organismsDiffer>
    <experiments>4</experiments>
</comment>
<comment type="interaction">
    <interactant intactId="EBI-6272972">
        <id>Q8K4E0</id>
    </interactant>
    <interactant intactId="EBI-445071">
        <id>P57780</id>
        <label>Actn4</label>
    </interactant>
    <organismsDiffer>false</organismsDiffer>
    <experiments>4</experiments>
</comment>
<comment type="interaction">
    <interactant intactId="EBI-6272972">
        <id>Q8K4E0</id>
    </interactant>
    <interactant intactId="EBI-8387079">
        <id>Q9D753</id>
        <label>Exosc8</label>
    </interactant>
    <organismsDiffer>false</organismsDiffer>
    <experiments>3</experiments>
</comment>
<comment type="subcellular location">
    <subcellularLocation>
        <location evidence="1">Cytoplasm</location>
    </subcellularLocation>
    <subcellularLocation>
        <location evidence="1">Cytoplasm</location>
        <location evidence="1">Cytoskeleton</location>
        <location evidence="1">Microtubule organizing center</location>
        <location evidence="1">Centrosome</location>
    </subcellularLocation>
    <subcellularLocation>
        <location evidence="1">Cytoplasm</location>
        <location evidence="1">Cytoskeleton</location>
        <location evidence="1">Cilium basal body</location>
    </subcellularLocation>
    <subcellularLocation>
        <location evidence="1">Cytoplasm</location>
        <location evidence="1">Cytoskeleton</location>
        <location evidence="1">Spindle pole</location>
    </subcellularLocation>
    <text evidence="1">Associated with centrosomes and basal bodies at the base of primary cilia. Specifically locates to the proximal ends of centrioles and basal bodies. Colocalizes partially with NCAPD2 at these sites. During mitosis localizes to both spindle poles (By similarity).</text>
</comment>
<comment type="alternative products">
    <event type="alternative splicing"/>
    <isoform>
        <id>Q8K4E0-1</id>
        <name>1</name>
        <sequence type="displayed"/>
    </isoform>
    <isoform>
        <id>Q8K4E0-2</id>
        <name>2</name>
        <sequence type="described" ref="VSP_017350"/>
    </isoform>
</comment>
<comment type="tissue specificity">
    <text evidence="4">Ubiquitously expressed.</text>
</comment>
<comment type="developmental stage">
    <text evidence="5">Expressed at 7.5 dpc. At 8.0 dpc expression is found in mesodermal- and ectodermal-derived layers. At 10.5 dpc mainly detected in midbrain, hindbrain, forelimb and hindlimb. Also expressed at 15.5 dpc and 18.5 dpc.</text>
</comment>
<comment type="disruption phenotype">
    <text evidence="5">Mice display obesity, hypogonadism, hyperinsulinemia, retinal dysfunction and hearing loss.</text>
</comment>
<comment type="similarity">
    <text evidence="7">Belongs to the ALMS1 family.</text>
</comment>
<comment type="sequence caution" evidence="7">
    <conflict type="erroneous initiation">
        <sequence resource="EMBL-CDS" id="BAD32212"/>
    </conflict>
</comment>
<organism>
    <name type="scientific">Mus musculus</name>
    <name type="common">Mouse</name>
    <dbReference type="NCBI Taxonomy" id="10090"/>
    <lineage>
        <taxon>Eukaryota</taxon>
        <taxon>Metazoa</taxon>
        <taxon>Chordata</taxon>
        <taxon>Craniata</taxon>
        <taxon>Vertebrata</taxon>
        <taxon>Euteleostomi</taxon>
        <taxon>Mammalia</taxon>
        <taxon>Eutheria</taxon>
        <taxon>Euarchontoglires</taxon>
        <taxon>Glires</taxon>
        <taxon>Rodentia</taxon>
        <taxon>Myomorpha</taxon>
        <taxon>Muroidea</taxon>
        <taxon>Muridae</taxon>
        <taxon>Murinae</taxon>
        <taxon>Mus</taxon>
        <taxon>Mus</taxon>
    </lineage>
</organism>
<accession>Q8K4E0</accession>
<accession>E9QKT8</accession>
<accession>Q6A084</accession>
<accession>Q8C9N9</accession>